<dbReference type="EC" id="4.3.3.6" evidence="6"/>
<dbReference type="EMBL" id="AC003028">
    <property type="protein sequence ID" value="AAC27172.1"/>
    <property type="molecule type" value="Genomic_DNA"/>
</dbReference>
<dbReference type="EMBL" id="CP002685">
    <property type="protein sequence ID" value="AEC09511.1"/>
    <property type="molecule type" value="Genomic_DNA"/>
</dbReference>
<dbReference type="EMBL" id="AF370296">
    <property type="protein sequence ID" value="AAK44111.1"/>
    <property type="molecule type" value="mRNA"/>
</dbReference>
<dbReference type="EMBL" id="AF385694">
    <property type="protein sequence ID" value="AAK60287.1"/>
    <property type="molecule type" value="mRNA"/>
</dbReference>
<dbReference type="EMBL" id="AY063043">
    <property type="protein sequence ID" value="AAL34217.1"/>
    <property type="molecule type" value="mRNA"/>
</dbReference>
<dbReference type="PIR" id="T01255">
    <property type="entry name" value="T01255"/>
</dbReference>
<dbReference type="PDB" id="5LNT">
    <property type="method" value="X-ray"/>
    <property type="resolution" value="2.32 A"/>
    <property type="chains" value="A/B/C/D=1-309"/>
</dbReference>
<dbReference type="PDBsum" id="5LNT"/>
<dbReference type="SMR" id="O80448"/>
<dbReference type="BioGRID" id="3744">
    <property type="interactions" value="7"/>
</dbReference>
<dbReference type="FunCoup" id="O80448">
    <property type="interactions" value="651"/>
</dbReference>
<dbReference type="IntAct" id="O80448">
    <property type="interactions" value="4"/>
</dbReference>
<dbReference type="STRING" id="3702.O80448"/>
<dbReference type="iPTMnet" id="O80448"/>
<dbReference type="PaxDb" id="3702-AT2G38230.1"/>
<dbReference type="ProteomicsDB" id="251375"/>
<dbReference type="DNASU" id="818402"/>
<dbReference type="EnsemblPlants" id="AT2G38230.1">
    <property type="protein sequence ID" value="AT2G38230.1"/>
    <property type="gene ID" value="AT2G38230"/>
</dbReference>
<dbReference type="GeneID" id="818402"/>
<dbReference type="Gramene" id="AT2G38230.1">
    <property type="protein sequence ID" value="AT2G38230.1"/>
    <property type="gene ID" value="AT2G38230"/>
</dbReference>
<dbReference type="KEGG" id="ath:AT2G38230"/>
<dbReference type="Araport" id="AT2G38230"/>
<dbReference type="TAIR" id="AT2G38230">
    <property type="gene designation" value="PDX1.1"/>
</dbReference>
<dbReference type="eggNOG" id="KOG1606">
    <property type="taxonomic scope" value="Eukaryota"/>
</dbReference>
<dbReference type="HOGENOM" id="CLU_055352_1_0_1"/>
<dbReference type="InParanoid" id="O80448"/>
<dbReference type="OMA" id="VICEATK"/>
<dbReference type="OrthoDB" id="1660966at2759"/>
<dbReference type="PhylomeDB" id="O80448"/>
<dbReference type="BioCyc" id="ARA:AT2G38230-MONOMER"/>
<dbReference type="BioCyc" id="MetaCyc:AT2G38230-MONOMER"/>
<dbReference type="UniPathway" id="UPA00245"/>
<dbReference type="PRO" id="PR:O80448"/>
<dbReference type="Proteomes" id="UP000006548">
    <property type="component" value="Chromosome 2"/>
</dbReference>
<dbReference type="ExpressionAtlas" id="O80448">
    <property type="expression patterns" value="baseline and differential"/>
</dbReference>
<dbReference type="GO" id="GO:0009507">
    <property type="term" value="C:chloroplast"/>
    <property type="evidence" value="ECO:0007005"/>
    <property type="project" value="TAIR"/>
</dbReference>
<dbReference type="GO" id="GO:0005829">
    <property type="term" value="C:cytosol"/>
    <property type="evidence" value="ECO:0000314"/>
    <property type="project" value="TAIR"/>
</dbReference>
<dbReference type="GO" id="GO:0005783">
    <property type="term" value="C:endoplasmic reticulum"/>
    <property type="evidence" value="ECO:0007005"/>
    <property type="project" value="TAIR"/>
</dbReference>
<dbReference type="GO" id="GO:0046982">
    <property type="term" value="F:protein heterodimerization activity"/>
    <property type="evidence" value="ECO:0000353"/>
    <property type="project" value="TAIR"/>
</dbReference>
<dbReference type="GO" id="GO:0036381">
    <property type="term" value="F:pyridoxal 5'-phosphate synthase (glutamine hydrolysing) activity"/>
    <property type="evidence" value="ECO:0007669"/>
    <property type="project" value="UniProtKB-EC"/>
</dbReference>
<dbReference type="GO" id="GO:0042823">
    <property type="term" value="P:pyridoxal phosphate biosynthetic process"/>
    <property type="evidence" value="ECO:0007669"/>
    <property type="project" value="UniProtKB-UniPathway"/>
</dbReference>
<dbReference type="CDD" id="cd04727">
    <property type="entry name" value="pdxS"/>
    <property type="match status" value="1"/>
</dbReference>
<dbReference type="FunFam" id="3.20.20.70:FF:000001">
    <property type="entry name" value="Pyridoxine biosynthesis protein PDX1"/>
    <property type="match status" value="1"/>
</dbReference>
<dbReference type="Gene3D" id="3.20.20.70">
    <property type="entry name" value="Aldolase class I"/>
    <property type="match status" value="1"/>
</dbReference>
<dbReference type="HAMAP" id="MF_01824">
    <property type="entry name" value="PdxS"/>
    <property type="match status" value="1"/>
</dbReference>
<dbReference type="InterPro" id="IPR013785">
    <property type="entry name" value="Aldolase_TIM"/>
</dbReference>
<dbReference type="InterPro" id="IPR001852">
    <property type="entry name" value="PdxS/SNZ"/>
</dbReference>
<dbReference type="InterPro" id="IPR033755">
    <property type="entry name" value="PdxS/SNZ_N"/>
</dbReference>
<dbReference type="InterPro" id="IPR011060">
    <property type="entry name" value="RibuloseP-bd_barrel"/>
</dbReference>
<dbReference type="NCBIfam" id="NF003215">
    <property type="entry name" value="PRK04180.1"/>
    <property type="match status" value="1"/>
</dbReference>
<dbReference type="NCBIfam" id="TIGR00343">
    <property type="entry name" value="pyridoxal 5'-phosphate synthase lyase subunit PdxS"/>
    <property type="match status" value="1"/>
</dbReference>
<dbReference type="PANTHER" id="PTHR31829:SF4">
    <property type="entry name" value="PYRIDOXAL 5'-PHOSPHATE SYNTHASE SUBUNIT PDX1.1"/>
    <property type="match status" value="1"/>
</dbReference>
<dbReference type="PANTHER" id="PTHR31829">
    <property type="entry name" value="PYRIDOXAL 5'-PHOSPHATE SYNTHASE SUBUNIT SNZ1-RELATED"/>
    <property type="match status" value="1"/>
</dbReference>
<dbReference type="Pfam" id="PF01680">
    <property type="entry name" value="SOR_SNZ"/>
    <property type="match status" value="1"/>
</dbReference>
<dbReference type="PIRSF" id="PIRSF029271">
    <property type="entry name" value="Pdx1"/>
    <property type="match status" value="1"/>
</dbReference>
<dbReference type="SUPFAM" id="SSF51366">
    <property type="entry name" value="Ribulose-phoshate binding barrel"/>
    <property type="match status" value="1"/>
</dbReference>
<dbReference type="PROSITE" id="PS01235">
    <property type="entry name" value="PDXS_SNZ_1"/>
    <property type="match status" value="1"/>
</dbReference>
<dbReference type="PROSITE" id="PS51129">
    <property type="entry name" value="PDXS_SNZ_2"/>
    <property type="match status" value="1"/>
</dbReference>
<reference key="1">
    <citation type="journal article" date="1999" name="Nature">
        <title>Sequence and analysis of chromosome 2 of the plant Arabidopsis thaliana.</title>
        <authorList>
            <person name="Lin X."/>
            <person name="Kaul S."/>
            <person name="Rounsley S.D."/>
            <person name="Shea T.P."/>
            <person name="Benito M.-I."/>
            <person name="Town C.D."/>
            <person name="Fujii C.Y."/>
            <person name="Mason T.M."/>
            <person name="Bowman C.L."/>
            <person name="Barnstead M.E."/>
            <person name="Feldblyum T.V."/>
            <person name="Buell C.R."/>
            <person name="Ketchum K.A."/>
            <person name="Lee J.J."/>
            <person name="Ronning C.M."/>
            <person name="Koo H.L."/>
            <person name="Moffat K.S."/>
            <person name="Cronin L.A."/>
            <person name="Shen M."/>
            <person name="Pai G."/>
            <person name="Van Aken S."/>
            <person name="Umayam L."/>
            <person name="Tallon L.J."/>
            <person name="Gill J.E."/>
            <person name="Adams M.D."/>
            <person name="Carrera A.J."/>
            <person name="Creasy T.H."/>
            <person name="Goodman H.M."/>
            <person name="Somerville C.R."/>
            <person name="Copenhaver G.P."/>
            <person name="Preuss D."/>
            <person name="Nierman W.C."/>
            <person name="White O."/>
            <person name="Eisen J.A."/>
            <person name="Salzberg S.L."/>
            <person name="Fraser C.M."/>
            <person name="Venter J.C."/>
        </authorList>
    </citation>
    <scope>NUCLEOTIDE SEQUENCE [LARGE SCALE GENOMIC DNA]</scope>
    <source>
        <strain>cv. Columbia</strain>
    </source>
</reference>
<reference key="2">
    <citation type="journal article" date="2017" name="Plant J.">
        <title>Araport11: a complete reannotation of the Arabidopsis thaliana reference genome.</title>
        <authorList>
            <person name="Cheng C.Y."/>
            <person name="Krishnakumar V."/>
            <person name="Chan A.P."/>
            <person name="Thibaud-Nissen F."/>
            <person name="Schobel S."/>
            <person name="Town C.D."/>
        </authorList>
    </citation>
    <scope>GENOME REANNOTATION</scope>
    <source>
        <strain>cv. Columbia</strain>
    </source>
</reference>
<reference key="3">
    <citation type="journal article" date="2003" name="Science">
        <title>Empirical analysis of transcriptional activity in the Arabidopsis genome.</title>
        <authorList>
            <person name="Yamada K."/>
            <person name="Lim J."/>
            <person name="Dale J.M."/>
            <person name="Chen H."/>
            <person name="Shinn P."/>
            <person name="Palm C.J."/>
            <person name="Southwick A.M."/>
            <person name="Wu H.C."/>
            <person name="Kim C.J."/>
            <person name="Nguyen M."/>
            <person name="Pham P.K."/>
            <person name="Cheuk R.F."/>
            <person name="Karlin-Newmann G."/>
            <person name="Liu S.X."/>
            <person name="Lam B."/>
            <person name="Sakano H."/>
            <person name="Wu T."/>
            <person name="Yu G."/>
            <person name="Miranda M."/>
            <person name="Quach H.L."/>
            <person name="Tripp M."/>
            <person name="Chang C.H."/>
            <person name="Lee J.M."/>
            <person name="Toriumi M.J."/>
            <person name="Chan M.M."/>
            <person name="Tang C.C."/>
            <person name="Onodera C.S."/>
            <person name="Deng J.M."/>
            <person name="Akiyama K."/>
            <person name="Ansari Y."/>
            <person name="Arakawa T."/>
            <person name="Banh J."/>
            <person name="Banno F."/>
            <person name="Bowser L."/>
            <person name="Brooks S.Y."/>
            <person name="Carninci P."/>
            <person name="Chao Q."/>
            <person name="Choy N."/>
            <person name="Enju A."/>
            <person name="Goldsmith A.D."/>
            <person name="Gurjal M."/>
            <person name="Hansen N.F."/>
            <person name="Hayashizaki Y."/>
            <person name="Johnson-Hopson C."/>
            <person name="Hsuan V.W."/>
            <person name="Iida K."/>
            <person name="Karnes M."/>
            <person name="Khan S."/>
            <person name="Koesema E."/>
            <person name="Ishida J."/>
            <person name="Jiang P.X."/>
            <person name="Jones T."/>
            <person name="Kawai J."/>
            <person name="Kamiya A."/>
            <person name="Meyers C."/>
            <person name="Nakajima M."/>
            <person name="Narusaka M."/>
            <person name="Seki M."/>
            <person name="Sakurai T."/>
            <person name="Satou M."/>
            <person name="Tamse R."/>
            <person name="Vaysberg M."/>
            <person name="Wallender E.K."/>
            <person name="Wong C."/>
            <person name="Yamamura Y."/>
            <person name="Yuan S."/>
            <person name="Shinozaki K."/>
            <person name="Davis R.W."/>
            <person name="Theologis A."/>
            <person name="Ecker J.R."/>
        </authorList>
    </citation>
    <scope>NUCLEOTIDE SEQUENCE [LARGE SCALE MRNA]</scope>
    <source>
        <strain>cv. Columbia</strain>
    </source>
</reference>
<reference key="4">
    <citation type="journal article" date="2005" name="Proc. Natl. Acad. Sci. U.S.A.">
        <title>Vitamin B6 biosynthesis in higher plants.</title>
        <authorList>
            <person name="Tambasco-Studart M."/>
            <person name="Titiz O."/>
            <person name="Raschle T."/>
            <person name="Forster G."/>
            <person name="Amrhein N."/>
            <person name="Fitzpatrick T.B."/>
        </authorList>
    </citation>
    <scope>FUNCTION</scope>
    <scope>SUBCELLULAR LOCATION</scope>
</reference>
<reference key="5">
    <citation type="journal article" date="2006" name="Plant Cell">
        <title>Analysis of the Arabidopsis rsr4-1/pdx1-3 mutant reveals the critical function of the PDX1 protein family in metabolism, development, and vitamin B6 biosynthesis.</title>
        <authorList>
            <person name="Wagner S."/>
            <person name="Bernhardt A."/>
            <person name="Leuendorf J.E."/>
            <person name="Drewke C."/>
            <person name="Lytovchenko A."/>
            <person name="Mujahed N."/>
            <person name="Gurgui C."/>
            <person name="Frommer W.B."/>
            <person name="Leistner E."/>
            <person name="Fernie A.R."/>
            <person name="Hellmann H."/>
        </authorList>
    </citation>
    <scope>TISSUE SPECIFICITY</scope>
    <scope>INTERACTION WITH PDX1.2; PDX1.3 AND PDX2</scope>
    <source>
        <strain>cv. C24</strain>
    </source>
</reference>
<reference key="6">
    <citation type="journal article" date="2007" name="Plant Physiol.">
        <title>Functional analysis of PDX2 from Arabidopsis, a glutaminase involved in vitamin B6 biosynthesis.</title>
        <authorList>
            <person name="Tambasco-Studart M."/>
            <person name="Tews I."/>
            <person name="Amrhein N."/>
            <person name="Fitzpatrick T.B."/>
        </authorList>
    </citation>
    <scope>FUNCTION</scope>
    <scope>CATALYTIC ACTIVITY</scope>
</reference>
<accession>O80448</accession>
<proteinExistence type="evidence at protein level"/>
<comment type="function">
    <text evidence="4 6">Catalyzes the formation of pyridoxal 5'-phosphate from ribose 5-phosphate (RBP), glyceraldehyde 3-phosphate (G3P) and ammonia. The ammonia is provided by PDX2. Can also use ribulose 5-phosphate and dihydroxyacetone phosphate as substrates, resulting from enzyme-catalyzed isomerization of RBP and G3P, respectively. Also plays an indirect role in resistance to singlet oxygen-generating photosensitizers.</text>
</comment>
<comment type="catalytic activity">
    <reaction evidence="6">
        <text>aldehydo-D-ribose 5-phosphate + D-glyceraldehyde 3-phosphate + L-glutamine = pyridoxal 5'-phosphate + L-glutamate + phosphate + 3 H2O + H(+)</text>
        <dbReference type="Rhea" id="RHEA:31507"/>
        <dbReference type="ChEBI" id="CHEBI:15377"/>
        <dbReference type="ChEBI" id="CHEBI:15378"/>
        <dbReference type="ChEBI" id="CHEBI:29985"/>
        <dbReference type="ChEBI" id="CHEBI:43474"/>
        <dbReference type="ChEBI" id="CHEBI:58273"/>
        <dbReference type="ChEBI" id="CHEBI:58359"/>
        <dbReference type="ChEBI" id="CHEBI:59776"/>
        <dbReference type="ChEBI" id="CHEBI:597326"/>
        <dbReference type="EC" id="4.3.3.6"/>
    </reaction>
</comment>
<comment type="pathway">
    <text>Cofactor biosynthesis; pyridoxal 5'-phosphate biosynthesis.</text>
</comment>
<comment type="subunit">
    <text evidence="5">Homodimer or heterodimer with PDX1.2 or PDX1.3. Interacts with PDX2.</text>
</comment>
<comment type="subcellular location">
    <subcellularLocation>
        <location evidence="4">Cytoplasm</location>
    </subcellularLocation>
</comment>
<comment type="tissue specificity">
    <text evidence="5">Expressed in flowers, shoots, leaves and weakly in roots.</text>
</comment>
<comment type="miscellaneous">
    <text>Vitamin B6 is an essential quencher of singlet oxygen in plants, that can protect cellular membranes from lipid peroxidation.</text>
</comment>
<comment type="similarity">
    <text evidence="7">Belongs to the PdxS/SNZ family.</text>
</comment>
<organism>
    <name type="scientific">Arabidopsis thaliana</name>
    <name type="common">Mouse-ear cress</name>
    <dbReference type="NCBI Taxonomy" id="3702"/>
    <lineage>
        <taxon>Eukaryota</taxon>
        <taxon>Viridiplantae</taxon>
        <taxon>Streptophyta</taxon>
        <taxon>Embryophyta</taxon>
        <taxon>Tracheophyta</taxon>
        <taxon>Spermatophyta</taxon>
        <taxon>Magnoliopsida</taxon>
        <taxon>eudicotyledons</taxon>
        <taxon>Gunneridae</taxon>
        <taxon>Pentapetalae</taxon>
        <taxon>rosids</taxon>
        <taxon>malvids</taxon>
        <taxon>Brassicales</taxon>
        <taxon>Brassicaceae</taxon>
        <taxon>Camelineae</taxon>
        <taxon>Arabidopsis</taxon>
    </lineage>
</organism>
<keyword id="KW-0002">3D-structure</keyword>
<keyword id="KW-0007">Acetylation</keyword>
<keyword id="KW-0963">Cytoplasm</keyword>
<keyword id="KW-0456">Lyase</keyword>
<keyword id="KW-0663">Pyridoxal phosphate</keyword>
<keyword id="KW-1185">Reference proteome</keyword>
<keyword id="KW-0704">Schiff base</keyword>
<evidence type="ECO:0000250" key="1">
    <source>
        <dbReference type="UniProtKB" id="O59080"/>
    </source>
</evidence>
<evidence type="ECO:0000250" key="2">
    <source>
        <dbReference type="UniProtKB" id="Q03148"/>
    </source>
</evidence>
<evidence type="ECO:0000250" key="3">
    <source>
        <dbReference type="UniProtKB" id="Q8L940"/>
    </source>
</evidence>
<evidence type="ECO:0000269" key="4">
    <source>
    </source>
</evidence>
<evidence type="ECO:0000269" key="5">
    <source>
    </source>
</evidence>
<evidence type="ECO:0000269" key="6">
    <source>
    </source>
</evidence>
<evidence type="ECO:0000305" key="7"/>
<evidence type="ECO:0007829" key="8">
    <source>
        <dbReference type="PDB" id="5LNT"/>
    </source>
</evidence>
<feature type="chain" id="PRO_0000109366" description="Pyridoxal 5'-phosphate synthase subunit PDX1.1">
    <location>
        <begin position="1"/>
        <end position="309"/>
    </location>
</feature>
<feature type="active site" description="Schiff-base intermediate with D-ribose 5-phosphate" evidence="1">
    <location>
        <position position="98"/>
    </location>
</feature>
<feature type="binding site" evidence="1">
    <location>
        <position position="41"/>
    </location>
    <ligand>
        <name>D-ribose 5-phosphate</name>
        <dbReference type="ChEBI" id="CHEBI:78346"/>
    </ligand>
</feature>
<feature type="binding site" evidence="1">
    <location>
        <position position="170"/>
    </location>
    <ligand>
        <name>D-ribose 5-phosphate</name>
        <dbReference type="ChEBI" id="CHEBI:78346"/>
    </ligand>
</feature>
<feature type="binding site" evidence="2">
    <location>
        <position position="182"/>
    </location>
    <ligand>
        <name>D-glyceraldehyde 3-phosphate</name>
        <dbReference type="ChEBI" id="CHEBI:59776"/>
    </ligand>
</feature>
<feature type="binding site" evidence="1">
    <location>
        <position position="231"/>
    </location>
    <ligand>
        <name>D-ribose 5-phosphate</name>
        <dbReference type="ChEBI" id="CHEBI:78346"/>
    </ligand>
</feature>
<feature type="binding site" evidence="1">
    <location>
        <begin position="252"/>
        <end position="253"/>
    </location>
    <ligand>
        <name>D-ribose 5-phosphate</name>
        <dbReference type="ChEBI" id="CHEBI:78346"/>
    </ligand>
</feature>
<feature type="modified residue" description="N-acetylmethionine" evidence="3">
    <location>
        <position position="1"/>
    </location>
</feature>
<feature type="helix" evidence="8">
    <location>
        <begin position="23"/>
        <end position="31"/>
    </location>
</feature>
<feature type="helix" evidence="8">
    <location>
        <begin position="32"/>
        <end position="34"/>
    </location>
</feature>
<feature type="strand" evidence="8">
    <location>
        <begin position="38"/>
        <end position="44"/>
    </location>
</feature>
<feature type="helix" evidence="8">
    <location>
        <begin position="45"/>
        <end position="53"/>
    </location>
</feature>
<feature type="strand" evidence="8">
    <location>
        <begin position="57"/>
        <end position="61"/>
    </location>
</feature>
<feature type="helix" evidence="8">
    <location>
        <begin position="66"/>
        <end position="72"/>
    </location>
</feature>
<feature type="helix" evidence="8">
    <location>
        <begin position="81"/>
        <end position="90"/>
    </location>
</feature>
<feature type="strand" evidence="8">
    <location>
        <begin position="95"/>
        <end position="100"/>
    </location>
</feature>
<feature type="helix" evidence="8">
    <location>
        <begin position="104"/>
        <end position="112"/>
    </location>
</feature>
<feature type="strand" evidence="8">
    <location>
        <begin position="116"/>
        <end position="121"/>
    </location>
</feature>
<feature type="helix" evidence="8">
    <location>
        <begin position="135"/>
        <end position="137"/>
    </location>
</feature>
<feature type="strand" evidence="8">
    <location>
        <begin position="142"/>
        <end position="148"/>
    </location>
</feature>
<feature type="helix" evidence="8">
    <location>
        <begin position="149"/>
        <end position="158"/>
    </location>
</feature>
<feature type="strand" evidence="8">
    <location>
        <begin position="161"/>
        <end position="166"/>
    </location>
</feature>
<feature type="helix" evidence="8">
    <location>
        <begin position="175"/>
        <end position="192"/>
    </location>
</feature>
<feature type="helix" evidence="8">
    <location>
        <begin position="196"/>
        <end position="198"/>
    </location>
</feature>
<feature type="helix" evidence="8">
    <location>
        <begin position="199"/>
        <end position="205"/>
    </location>
</feature>
<feature type="helix" evidence="8">
    <location>
        <begin position="210"/>
        <end position="219"/>
    </location>
</feature>
<feature type="strand" evidence="8">
    <location>
        <begin position="223"/>
        <end position="230"/>
    </location>
</feature>
<feature type="helix" evidence="8">
    <location>
        <begin position="235"/>
        <end position="243"/>
    </location>
</feature>
<feature type="strand" evidence="8">
    <location>
        <begin position="247"/>
        <end position="253"/>
    </location>
</feature>
<feature type="turn" evidence="8">
    <location>
        <begin position="254"/>
        <end position="257"/>
    </location>
</feature>
<feature type="helix" evidence="8">
    <location>
        <begin position="261"/>
        <end position="273"/>
    </location>
</feature>
<feature type="turn" evidence="8">
    <location>
        <begin position="274"/>
        <end position="276"/>
    </location>
</feature>
<feature type="helix" evidence="8">
    <location>
        <begin position="278"/>
        <end position="285"/>
    </location>
</feature>
<protein>
    <recommendedName>
        <fullName>Pyridoxal 5'-phosphate synthase subunit PDX1.1</fullName>
        <shortName>AtPDX1.1</shortName>
        <shortName>AtPDX1;2</shortName>
        <shortName>PLP synthase subunit PDX1.1</shortName>
        <ecNumber evidence="6">4.3.3.6</ecNumber>
    </recommendedName>
    <alternativeName>
        <fullName>HEVER-like protein</fullName>
    </alternativeName>
</protein>
<name>PDX11_ARATH</name>
<gene>
    <name type="primary">PDX11</name>
    <name type="synonym">PDX1L1</name>
    <name type="ordered locus">At2g38230</name>
    <name type="ORF">F16M14.16</name>
</gene>
<sequence length="309" mass="32862">MAGTGVVAVYGEGAMTETKQKSPFSVKVGLAQMLRGGVIMDVVNAEQARIAEEAGACAVMALERVPADIRAQGGVARMSDPEMIKEIKNAVTIPVMAKARIGHFVEAQILEAIGVDYVDESEVLTLADEDNHINKHNFKIPFVCGCRNLGEALRRIREGAAMIRTKGEAGTGNVVEAVRHVRSVNGAIRLLRSMDDDEVFTYAKKIAAPYDLVVQTKELGRLPVVQFAAGGVATPADAALMMQLGCDGVFVGSGVFKSGDPVKRAKAIVQAVTNYRDAAVLAEVSCGLGEAMVGLNLDDKVERFASRSE</sequence>